<accession>Q1DPU4</accession>
<accession>J3K4J4</accession>
<feature type="chain" id="PRO_0000365364" description="Eukaryotic translation initiation factor 3 subunit I">
    <location>
        <begin position="1"/>
        <end position="340"/>
    </location>
</feature>
<feature type="repeat" description="WD 1">
    <location>
        <begin position="8"/>
        <end position="47"/>
    </location>
</feature>
<feature type="repeat" description="WD 2">
    <location>
        <begin position="50"/>
        <end position="89"/>
    </location>
</feature>
<feature type="repeat" description="WD 3">
    <location>
        <begin position="91"/>
        <end position="135"/>
    </location>
</feature>
<feature type="repeat" description="WD 4">
    <location>
        <begin position="150"/>
        <end position="189"/>
    </location>
</feature>
<feature type="repeat" description="WD 5">
    <location>
        <begin position="194"/>
        <end position="233"/>
    </location>
</feature>
<feature type="repeat" description="WD 6">
    <location>
        <begin position="291"/>
        <end position="330"/>
    </location>
</feature>
<reference key="1">
    <citation type="journal article" date="2009" name="Genome Res.">
        <title>Comparative genomic analyses of the human fungal pathogens Coccidioides and their relatives.</title>
        <authorList>
            <person name="Sharpton T.J."/>
            <person name="Stajich J.E."/>
            <person name="Rounsley S.D."/>
            <person name="Gardner M.J."/>
            <person name="Wortman J.R."/>
            <person name="Jordar V.S."/>
            <person name="Maiti R."/>
            <person name="Kodira C.D."/>
            <person name="Neafsey D.E."/>
            <person name="Zeng Q."/>
            <person name="Hung C.-Y."/>
            <person name="McMahan C."/>
            <person name="Muszewska A."/>
            <person name="Grynberg M."/>
            <person name="Mandel M.A."/>
            <person name="Kellner E.M."/>
            <person name="Barker B.M."/>
            <person name="Galgiani J.N."/>
            <person name="Orbach M.J."/>
            <person name="Kirkland T.N."/>
            <person name="Cole G.T."/>
            <person name="Henn M.R."/>
            <person name="Birren B.W."/>
            <person name="Taylor J.W."/>
        </authorList>
    </citation>
    <scope>NUCLEOTIDE SEQUENCE [LARGE SCALE GENOMIC DNA]</scope>
    <source>
        <strain>RS</strain>
    </source>
</reference>
<reference key="2">
    <citation type="journal article" date="2010" name="Genome Res.">
        <title>Population genomic sequencing of Coccidioides fungi reveals recent hybridization and transposon control.</title>
        <authorList>
            <person name="Neafsey D.E."/>
            <person name="Barker B.M."/>
            <person name="Sharpton T.J."/>
            <person name="Stajich J.E."/>
            <person name="Park D.J."/>
            <person name="Whiston E."/>
            <person name="Hung C.-Y."/>
            <person name="McMahan C."/>
            <person name="White J."/>
            <person name="Sykes S."/>
            <person name="Heiman D."/>
            <person name="Young S."/>
            <person name="Zeng Q."/>
            <person name="Abouelleil A."/>
            <person name="Aftuck L."/>
            <person name="Bessette D."/>
            <person name="Brown A."/>
            <person name="FitzGerald M."/>
            <person name="Lui A."/>
            <person name="Macdonald J.P."/>
            <person name="Priest M."/>
            <person name="Orbach M.J."/>
            <person name="Galgiani J.N."/>
            <person name="Kirkland T.N."/>
            <person name="Cole G.T."/>
            <person name="Birren B.W."/>
            <person name="Henn M.R."/>
            <person name="Taylor J.W."/>
            <person name="Rounsley S.D."/>
        </authorList>
    </citation>
    <scope>GENOME REANNOTATION</scope>
    <source>
        <strain>RS</strain>
    </source>
</reference>
<evidence type="ECO:0000255" key="1">
    <source>
        <dbReference type="HAMAP-Rule" id="MF_03008"/>
    </source>
</evidence>
<sequence length="340" mass="37851">MRPILLQGHERSLNQIRFNHDGDLLFSVAKDKILCAWYSANGERLGTYHGHQGALWTVDVSPGTVLLATGAADNTVRLWNAKSGECVKVWDFPTAVKRVEFSPDGSRLLAVTEKRMGYLGTIVVFDVRYGDGEGNNLDDQTDEPSLKITCEQSKATVAGWSFLGKYIIAGHEDGSVSQYDSKTGEQLQNVQAHEFDYQINDLQFSADRTYFITASKDKSAKIISCRDLQVMKTFVADTPLNTAAITPKKDFVILGGGQAAMDVTTTSARQGKFEARFYHKIFEDEIGRVRGHFGPLNTIAVHPAGTGYASGGEDGYVRVHHFDKPYFDFMYEVEREKARR</sequence>
<gene>
    <name evidence="1" type="primary">TIF34</name>
    <name type="ORF">CIMG_07669</name>
</gene>
<proteinExistence type="inferred from homology"/>
<dbReference type="EMBL" id="GG704913">
    <property type="protein sequence ID" value="EAS28923.3"/>
    <property type="molecule type" value="Genomic_DNA"/>
</dbReference>
<dbReference type="RefSeq" id="XP_001240506.1">
    <property type="nucleotide sequence ID" value="XM_001240505.2"/>
</dbReference>
<dbReference type="SMR" id="Q1DPU4"/>
<dbReference type="FunCoup" id="Q1DPU4">
    <property type="interactions" value="1051"/>
</dbReference>
<dbReference type="STRING" id="246410.Q1DPU4"/>
<dbReference type="GeneID" id="4559714"/>
<dbReference type="KEGG" id="cim:CIMG_07669"/>
<dbReference type="VEuPathDB" id="FungiDB:CIMG_07669"/>
<dbReference type="InParanoid" id="Q1DPU4"/>
<dbReference type="OMA" id="VWFSHNG"/>
<dbReference type="OrthoDB" id="24966at2759"/>
<dbReference type="Proteomes" id="UP000001261">
    <property type="component" value="Unassembled WGS sequence"/>
</dbReference>
<dbReference type="GO" id="GO:0016282">
    <property type="term" value="C:eukaryotic 43S preinitiation complex"/>
    <property type="evidence" value="ECO:0007669"/>
    <property type="project" value="UniProtKB-UniRule"/>
</dbReference>
<dbReference type="GO" id="GO:0033290">
    <property type="term" value="C:eukaryotic 48S preinitiation complex"/>
    <property type="evidence" value="ECO:0007669"/>
    <property type="project" value="UniProtKB-UniRule"/>
</dbReference>
<dbReference type="GO" id="GO:0071541">
    <property type="term" value="C:eukaryotic translation initiation factor 3 complex, eIF3m"/>
    <property type="evidence" value="ECO:0007669"/>
    <property type="project" value="TreeGrafter"/>
</dbReference>
<dbReference type="GO" id="GO:0003723">
    <property type="term" value="F:RNA binding"/>
    <property type="evidence" value="ECO:0007669"/>
    <property type="project" value="TreeGrafter"/>
</dbReference>
<dbReference type="GO" id="GO:0003743">
    <property type="term" value="F:translation initiation factor activity"/>
    <property type="evidence" value="ECO:0007669"/>
    <property type="project" value="UniProtKB-UniRule"/>
</dbReference>
<dbReference type="GO" id="GO:0001732">
    <property type="term" value="P:formation of cytoplasmic translation initiation complex"/>
    <property type="evidence" value="ECO:0007669"/>
    <property type="project" value="UniProtKB-UniRule"/>
</dbReference>
<dbReference type="FunFam" id="2.130.10.10:FF:000127">
    <property type="entry name" value="Eukaryotic translation initiation factor 3 subunit I"/>
    <property type="match status" value="1"/>
</dbReference>
<dbReference type="Gene3D" id="2.130.10.10">
    <property type="entry name" value="YVTN repeat-like/Quinoprotein amine dehydrogenase"/>
    <property type="match status" value="1"/>
</dbReference>
<dbReference type="HAMAP" id="MF_03008">
    <property type="entry name" value="eIF3i"/>
    <property type="match status" value="1"/>
</dbReference>
<dbReference type="InterPro" id="IPR027525">
    <property type="entry name" value="eIF3i"/>
</dbReference>
<dbReference type="InterPro" id="IPR015943">
    <property type="entry name" value="WD40/YVTN_repeat-like_dom_sf"/>
</dbReference>
<dbReference type="InterPro" id="IPR019775">
    <property type="entry name" value="WD40_repeat_CS"/>
</dbReference>
<dbReference type="InterPro" id="IPR036322">
    <property type="entry name" value="WD40_repeat_dom_sf"/>
</dbReference>
<dbReference type="InterPro" id="IPR001680">
    <property type="entry name" value="WD40_rpt"/>
</dbReference>
<dbReference type="PANTHER" id="PTHR19877">
    <property type="entry name" value="EUKARYOTIC TRANSLATION INITIATION FACTOR 3 SUBUNIT I"/>
    <property type="match status" value="1"/>
</dbReference>
<dbReference type="PANTHER" id="PTHR19877:SF1">
    <property type="entry name" value="EUKARYOTIC TRANSLATION INITIATION FACTOR 3 SUBUNIT I"/>
    <property type="match status" value="1"/>
</dbReference>
<dbReference type="Pfam" id="PF24805">
    <property type="entry name" value="EIF3I"/>
    <property type="match status" value="1"/>
</dbReference>
<dbReference type="SMART" id="SM00320">
    <property type="entry name" value="WD40"/>
    <property type="match status" value="6"/>
</dbReference>
<dbReference type="SUPFAM" id="SSF50978">
    <property type="entry name" value="WD40 repeat-like"/>
    <property type="match status" value="1"/>
</dbReference>
<dbReference type="PROSITE" id="PS00678">
    <property type="entry name" value="WD_REPEATS_1"/>
    <property type="match status" value="1"/>
</dbReference>
<dbReference type="PROSITE" id="PS50082">
    <property type="entry name" value="WD_REPEATS_2"/>
    <property type="match status" value="2"/>
</dbReference>
<dbReference type="PROSITE" id="PS50294">
    <property type="entry name" value="WD_REPEATS_REGION"/>
    <property type="match status" value="2"/>
</dbReference>
<protein>
    <recommendedName>
        <fullName evidence="1">Eukaryotic translation initiation factor 3 subunit I</fullName>
        <shortName evidence="1">eIF3i</shortName>
    </recommendedName>
    <alternativeName>
        <fullName evidence="1">Eukaryotic translation initiation factor 3 39 kDa subunit homolog</fullName>
        <shortName evidence="1">eIF-3 39 kDa subunit homolog</shortName>
    </alternativeName>
</protein>
<organism>
    <name type="scientific">Coccidioides immitis (strain RS)</name>
    <name type="common">Valley fever fungus</name>
    <dbReference type="NCBI Taxonomy" id="246410"/>
    <lineage>
        <taxon>Eukaryota</taxon>
        <taxon>Fungi</taxon>
        <taxon>Dikarya</taxon>
        <taxon>Ascomycota</taxon>
        <taxon>Pezizomycotina</taxon>
        <taxon>Eurotiomycetes</taxon>
        <taxon>Eurotiomycetidae</taxon>
        <taxon>Onygenales</taxon>
        <taxon>Onygenaceae</taxon>
        <taxon>Coccidioides</taxon>
    </lineage>
</organism>
<comment type="function">
    <text evidence="1">Component of the eukaryotic translation initiation factor 3 (eIF-3) complex, which is involved in protein synthesis of a specialized repertoire of mRNAs and, together with other initiation factors, stimulates binding of mRNA and methionyl-tRNAi to the 40S ribosome. The eIF-3 complex specifically targets and initiates translation of a subset of mRNAs involved in cell proliferation.</text>
</comment>
<comment type="subunit">
    <text evidence="1">Component of the eukaryotic translation initiation factor 3 (eIF-3) complex.</text>
</comment>
<comment type="subcellular location">
    <subcellularLocation>
        <location evidence="1">Cytoplasm</location>
    </subcellularLocation>
</comment>
<comment type="similarity">
    <text evidence="1">Belongs to the eIF-3 subunit I family.</text>
</comment>
<keyword id="KW-0963">Cytoplasm</keyword>
<keyword id="KW-0396">Initiation factor</keyword>
<keyword id="KW-0648">Protein biosynthesis</keyword>
<keyword id="KW-1185">Reference proteome</keyword>
<keyword id="KW-0677">Repeat</keyword>
<keyword id="KW-0853">WD repeat</keyword>
<name>EIF3I_COCIM</name>